<comment type="function">
    <text evidence="3 6 7 8 9 10 11 13 14 17">Pore-forming subunit of the mechanosensitive non-specific cation Piezo channel required for rapidly adapting mechanically activated (MA) currents and has a key role in sensing touch and tactile pain (PubMed:20813920, PubMed:24717433, PubMed:31435011, PubMed:37590348). Piezo channels are homotrimeric three-blade propeller-shaped structures that utilize a cap-motion and plug-and-latch mechanism to gate their ion-conducting pathways (PubMed:31435011, PubMed:37590348). Expressed in sensory neurons, is essential for diverse physiological processes, including respiratory control, systemic metabolism, urinary function, and proprioception (PubMed:26551544, PubMed:28002412, PubMed:33057202, PubMed:39919739). Mediates airway stretch sensing, enabling efficient respiration at birth and maintaining normal breathing in adults (PubMed:28002412). It regulates brown and beige adipose tissue morphology and function, preventing systemic hypermetabolism (PubMed:39919739). In the lower urinary tract, acts as a sensor in both the bladder urothelium and innervating sensory neurons and is required for bladder-stretch sensing and urethral micturition reflexes, ensuring proper urinary function (PubMed:33057202). Additionally, Piezo2 serves as the principal mechanotransducer in proprioceptors, facilitating proprioception and coordinated body movements (PubMed:26551544). In inner ear hair cells, PIEZO1/2 subunits may constitute part of the mechanotransducer (MET) non-selective cation channel complex where they may act as pore-forming ion-conducting component in the complex (PubMed:38228630). Required for Merkel-cell mechanotransduction (PubMed:24717433). Plays a major role in light-touch mechanosensation (PubMed:25471886).</text>
</comment>
<comment type="catalytic activity">
    <reaction evidence="10">
        <text>Ca(2+)(in) = Ca(2+)(out)</text>
        <dbReference type="Rhea" id="RHEA:29671"/>
        <dbReference type="ChEBI" id="CHEBI:29108"/>
    </reaction>
</comment>
<comment type="activity regulation">
    <text evidence="12 13 16">Regulated by auxillary subunits MDFIC and MDFI (PubMed:37590348). Channel activity is inhibited by TMEM120aa (PubMed:35819364). Phosphatidic acid and lysophosphatidic acid inhibit Piezo2 channel activity (PubMed:39147733).</text>
</comment>
<comment type="subunit">
    <text evidence="4 5 10 13 14 15">Homotrimer; the homotrimer forms a propeller-shaped Piezo channel with a cation-ion conducting pore (PubMed:37590348, PubMed:31435011). Heterotrimeric interaction may occur between PIEZO1 and PIEZO2 (PubMed:38228630). Interacts with STOM13. Interacts with TMC7; the interaction inhibits PIEZO2-conducted mechanically activated currents (PubMed:38568807). Interacts with TMC1; the interaction may be part of the MET complex (PubMed:38228630). Interacts with MDFIC (via C-terminus); the interaction prolongs Piezo channel inactivation (PubMed:37590348). Interacts with MDFI (via C-terminus); the interaction prolongs Piezo channel inactivation (PubMed:37590348).</text>
</comment>
<comment type="subcellular location">
    <subcellularLocation>
        <location evidence="14 22">Cell membrane</location>
        <topology evidence="10">Multi-pass membrane protein</topology>
    </subcellularLocation>
    <text evidence="14">Located at the tips and sides of stereocilia and cuticular plate membranes.</text>
</comment>
<comment type="alternative products">
    <event type="alternative splicing"/>
    <isoform>
        <id>Q8CD54-1</id>
        <name>1</name>
        <sequence type="displayed"/>
    </isoform>
    <isoform>
        <id>Q8CD54-2</id>
        <name>2</name>
        <sequence type="described" ref="VSP_040473 VSP_040474"/>
    </isoform>
    <isoform>
        <id>Q8CD54-3</id>
        <name>3</name>
        <sequence type="described" ref="VSP_040631 VSP_040632"/>
    </isoform>
</comment>
<comment type="tissue specificity">
    <text evidence="3 5 6 7 8 9 11 14 15 17">Expressed in bladder, colon, and lung, but less abundant in kidney or skin (PubMed:20813920). Strong expression is observed in dorsal root ganglia (DRG) sensory neurons (PubMed:20813920, PubMed:38568807). Expressed in a wide range of cutaneous low-threshold mechanoreceptors (LTMRs), including Merkel cells and Meissner's corpuscles (PubMed:24717433, PubMed:25471886). Expressed in sensory neurons (PubMed:24662763, PubMed:28002412, PubMed:33057202, PubMed:39919739). Expressed in cochlear inner and outer hair cells and vestibular organ hair cells (PubMed:38228630). Expressed in pulmonary neuroepithelial cell bodies (PubMed:28002412). Expressed in bladder urothelium and sensory neurons of the lower urinary tract (PubMed:33057202). Expressed in sensory endings of proprioceptors innervating muscle spindles and Golgi tendon organs (PubMed:26551544).</text>
</comment>
<comment type="disruption phenotype">
    <text evidence="7 8 9 14 17">Perinatal lethality. Pups show signs of respiratory distress, such as cyanosis and gasping and also failed to suckle and die within 24h of birth (PubMed:25471886, PubMed:28002412). Conditional knockout in sensory neurons and Merkel cells causes severe defects in light-touch sensation, although detection of pain (nociception) is unaffected (PubMed:25471886). Conditional knockout in inner ear hair cells show no auditory and vestibular defects (PubMed:38228630). Conditional knockout in sensory neurons leads to lower body weight, primarily due to a reduction in fat mas with reduced mobility and similar food intake. Conditional knockout also exhibit reduced fasting blood glucose levels and increased glucose tolerance, as well as reduced fasting insulin levels and increased insulin sensitivity (PubMed:39919739). Conditional knockout in proprioceptors causes severe impairment in limb coordination (PubMed:26551544).</text>
</comment>
<comment type="miscellaneous">
    <text evidence="21">Piezo comes from the Greek 'piesi' meaning pressure.</text>
</comment>
<comment type="miscellaneous">
    <molecule>Isoform 2</molecule>
    <text evidence="20">Due to intron retention.</text>
</comment>
<comment type="similarity">
    <text evidence="20">Belongs to the PIEZO (TC 1.A.75) family.</text>
</comment>
<comment type="sequence caution" evidence="20">
    <conflict type="erroneous initiation">
        <sequence resource="EMBL-CDS" id="BAB31242"/>
    </conflict>
    <text>Truncated N-terminus.</text>
</comment>
<comment type="sequence caution" evidence="20">
    <conflict type="erroneous initiation">
        <sequence resource="EMBL-CDS" id="BAC27312"/>
    </conflict>
    <text>Truncated N-terminus.</text>
</comment>
<comment type="sequence caution" evidence="20">
    <conflict type="erroneous initiation">
        <sequence resource="EMBL-CDS" id="BAC27396"/>
    </conflict>
    <text>Truncated N-terminus.</text>
</comment>
<sequence length="2822" mass="325628">MASEVVCGLIFRLLLPICLAVACAFRYNGLSFVYLIYLLLIPLFSEPTKATMQGHTGRLLQSLCITSLSFLLLHIIFHITLASLEAQHRITPAYNCSTWEKTFRQIGFESLKGADAGNGIRVFVPDIGMFIASLTIWLVCRTIVKKPDTEEIAQLNSECENEELAGGEKMDSEEALIYEEDLDGEEGMEGELEESTKLKILRRFASVASKLKEFIGNMITTAGKVVVTILLGSSGMMLPSLTSAVYFFVFLGLCTWWSWCRTFDPLLFGCLCVLLAIFTAGHLIGLYLYQFQFFQEAVPPNDYYARLFGIKSVIQTDCASTWKIIVNPDLSWYHHANPILLLVMYYTLATLIRIWLQEPLVQEEMAKEDEGALDCSSNQNTAERRRSLWYATQYPTDERKLLSMTQDDYKPSDGLLVTVNGNPVDYHTIHPSLPIENGPAKTDLYTTPQYRWEPSEESSEKKEEEEDKREDSEGEGSQEEKRSVRMHAMVAVFQFIMKQSYICALIAMMAWSITYHSWLTFVLLIWSCTLWMIRNRRKYAMISSPFMVVYANLLLVLQYIWSFELPEIKKVPGFLEKKEPGELASKILFTITFWLLLRQHLTEQKALREKEALLSEVKIGSQELEEKEDEELQDVQVEGEPTEKEEEEEEEIKEERHEVKKEEEEEVEEDDDQDIMKVLGNLVVALFIKYWIYVCGGMFFFVSFEGKIVMYKIIYMVLFLFCVALYQVHYEWWRKILKYFWMSVVIYTMLVLIFIYTYQFENFPGLWQNMTGLKKEKLEDLGLKQFTVAELFTRIFIPTSFLLVCILHLHYFHDRFLELTDLKSIPSKEDNTIYSHAKVNGRVYLIINRLAHPEGSLPDLAIMNMTASLDKPEVQKLAESGEERPEECVKKTEKGEAGKDSDESEEEEDEEEESEEEESSDLRNKWHLVIDRLTVLFLKFLEYFHKLQVFMWWILELHIIKIVSSYIIWVTVKEVSLFNYVFLISWAFALPYAKLRRAASSVCTVWTCVIIVCKMLYQLQTIKPENFSVNCSLPNENQTNIPLHELNKSLLYSAPVDPTEWVGLRKSSPLLVYLRNNLLMLAILAFEVTVYRHQEYYRGRNNLTAPVSKTIFHDITRLHLDDGLINCAKYFVNYFFYKFGLETCFLMSVNVIGQRMDFYAMIHACWLIGVLYRRRRKAIAEVWPKYCCFLACIITFQYFVCIGIPPAPCRDYPWRFKGAYFNDNIIKWLYFPDFIVRPNPVFLVYDFMLLLCASLQRQIFEDENKAAVRIMAGDNVEICMNLDAASFSQHNPVPDFIHCRSYLDMSKVIIFSYLFWFVLTIIFITGTTRISIFCMGYLVACFYFLLFGGDLLLKPIKSILRYWDWLIAYNVFVITMKNILSIGACGYIGALVRNSCWLIQAFSLACTVKGYQMPEDDSRCKLPSGEAGIIWDSICFAFLLLQRRVFMSYYFLHVVADIKASQILASRGAELFQATIVKAVKARIEEEKKSMDQLKRQMDRIKARQQKYKKGKERMLSLTQESGEGQDIQKVSEEDDEREADKQKAKGKKKQWWRPWVDHASMVRSGDYYLFETDSEEEEEEELKKEDEEPPRKSAFQFVYQAWITDPKTALRQRRKEKKKLAREEQKERRKGSGDGPVEWEDREDEPVKKKSDGPDNIIKRIFNILKFTWVLFLATVDSFTTWLNSISREHIDISTVLRIERCMLTREIKKGNVPTRESIHMYYQNHIMNLSRESGLDTIDEHSGAGSRAQAAHRMDSLDSRDSISSCYTEATLLISRQSTLDDLDGQDPVPKTSERARPRLRKMFSLDMSSSSADSGSVASSEPTQCTMLYSRQGTTETIEEVEAEAEEEVVEGLEPELHDAEEKEYAAEYEAGVEEISLTPDEELPQFSTDDCEAPPSYSKAVSFEHLSFASQDDSGAKNHMVVSPDDSRTDKLESSILPPLTHELTASDLLMSKMFHDDELEESEKFYVDQPRFLLLFYAMYNTLVARSEMVCYFVIILNHMTSASIITLLLPILIFLWAMLSVPRPSRRFWMMAIVYTEVAIVVKYFFQFGFFPWNKDLEIYKERPYFPPNIIGVEKKEGYVLYDLIQLLALFFHRSILKCHGLWDEDDIVDSNTDKEGSDDELSLDQGRRGSSDSLKSINLAASVESVHVTFPEQPAAIRRKRSCSSSQISPRSSFSSNRSKRGSTSTRNSSQKGSSVLSLKQKSKRELYMEKLQEHLIKAKAFTIKKTLQIYVPIRQFFYDLIHPDYSAVTDVYVLMFLADTVDFIIIVFGFWAFGKHSAAADITSSLSEDQVPGPFLVMVLIQFGTMVVDRALYLRKTVLGKVIFQVILVFGIHFWMFFILPGVTERKFSQNLVAQLWYFVKCVYFGLSAYQIRCGYPTRVLGNFLTKSYNYVNLFLFQGFRLVPFLTELRAVMDWVWTDTTLSLSSWICVEDIYAHIFILKCWRESEKRYPQPRGQKKKKAVKYGMGGMIIVLLICIVWFPLLFMSLIKSVAGVINQPLDVSVTITLGGYQPIFTMSAQQSQLKVMDNSKYNEFLKSFGPNSGAMQFLENYEREDVTVAELEGNSNSLWTISPPSKQKMIQELTDPNSCFSVVFSWSIQRNMTLGAKAEIATDKLSFPLAVATRNSIAKMIAGNDTESSNTPVTIEKIYPYYVKAPSDSNSKPIKQLLSENNFMNITIILFRDNVTKSNSEWWVLNLTGSRIFNQGSQALELVVFNDKVSPPSLGFLAGYGIMGLYASVVLVIGKFVREFFSGISHSIMFEELPNVDRILKLCTDIFLVRETGELELEEDLYAKLIFLYRSPETMIKWTREKTN</sequence>
<name>PIEZ2_MOUSE</name>
<proteinExistence type="evidence at protein level"/>
<keyword id="KW-0002">3D-structure</keyword>
<keyword id="KW-0025">Alternative splicing</keyword>
<keyword id="KW-1003">Cell membrane</keyword>
<keyword id="KW-0175">Coiled coil</keyword>
<keyword id="KW-1015">Disulfide bond</keyword>
<keyword id="KW-0325">Glycoprotein</keyword>
<keyword id="KW-0407">Ion channel</keyword>
<keyword id="KW-0406">Ion transport</keyword>
<keyword id="KW-0472">Membrane</keyword>
<keyword id="KW-0597">Phosphoprotein</keyword>
<keyword id="KW-1185">Reference proteome</keyword>
<keyword id="KW-0716">Sensory transduction</keyword>
<keyword id="KW-0812">Transmembrane</keyword>
<keyword id="KW-1133">Transmembrane helix</keyword>
<keyword id="KW-0813">Transport</keyword>
<reference key="1">
    <citation type="journal article" date="2010" name="Science">
        <title>Piezo1 and Piezo2 are essential components of distinct mechanically activated cation channels.</title>
        <authorList>
            <person name="Coste B."/>
            <person name="Mathur J."/>
            <person name="Schmidt M."/>
            <person name="Earley T.J."/>
            <person name="Ranade S."/>
            <person name="Petrus M.J."/>
            <person name="Dubin A.E."/>
            <person name="Patapoutian A."/>
        </authorList>
    </citation>
    <scope>NUCLEOTIDE SEQUENCE [MRNA]</scope>
    <scope>FUNCTION</scope>
    <scope>TISSUE SPECIFICITY</scope>
    <source>
        <strain>C57BL/6J</strain>
    </source>
</reference>
<reference key="2">
    <citation type="journal article" date="2005" name="Science">
        <title>The transcriptional landscape of the mammalian genome.</title>
        <authorList>
            <person name="Carninci P."/>
            <person name="Kasukawa T."/>
            <person name="Katayama S."/>
            <person name="Gough J."/>
            <person name="Frith M.C."/>
            <person name="Maeda N."/>
            <person name="Oyama R."/>
            <person name="Ravasi T."/>
            <person name="Lenhard B."/>
            <person name="Wells C."/>
            <person name="Kodzius R."/>
            <person name="Shimokawa K."/>
            <person name="Bajic V.B."/>
            <person name="Brenner S.E."/>
            <person name="Batalov S."/>
            <person name="Forrest A.R."/>
            <person name="Zavolan M."/>
            <person name="Davis M.J."/>
            <person name="Wilming L.G."/>
            <person name="Aidinis V."/>
            <person name="Allen J.E."/>
            <person name="Ambesi-Impiombato A."/>
            <person name="Apweiler R."/>
            <person name="Aturaliya R.N."/>
            <person name="Bailey T.L."/>
            <person name="Bansal M."/>
            <person name="Baxter L."/>
            <person name="Beisel K.W."/>
            <person name="Bersano T."/>
            <person name="Bono H."/>
            <person name="Chalk A.M."/>
            <person name="Chiu K.P."/>
            <person name="Choudhary V."/>
            <person name="Christoffels A."/>
            <person name="Clutterbuck D.R."/>
            <person name="Crowe M.L."/>
            <person name="Dalla E."/>
            <person name="Dalrymple B.P."/>
            <person name="de Bono B."/>
            <person name="Della Gatta G."/>
            <person name="di Bernardo D."/>
            <person name="Down T."/>
            <person name="Engstrom P."/>
            <person name="Fagiolini M."/>
            <person name="Faulkner G."/>
            <person name="Fletcher C.F."/>
            <person name="Fukushima T."/>
            <person name="Furuno M."/>
            <person name="Futaki S."/>
            <person name="Gariboldi M."/>
            <person name="Georgii-Hemming P."/>
            <person name="Gingeras T.R."/>
            <person name="Gojobori T."/>
            <person name="Green R.E."/>
            <person name="Gustincich S."/>
            <person name="Harbers M."/>
            <person name="Hayashi Y."/>
            <person name="Hensch T.K."/>
            <person name="Hirokawa N."/>
            <person name="Hill D."/>
            <person name="Huminiecki L."/>
            <person name="Iacono M."/>
            <person name="Ikeo K."/>
            <person name="Iwama A."/>
            <person name="Ishikawa T."/>
            <person name="Jakt M."/>
            <person name="Kanapin A."/>
            <person name="Katoh M."/>
            <person name="Kawasawa Y."/>
            <person name="Kelso J."/>
            <person name="Kitamura H."/>
            <person name="Kitano H."/>
            <person name="Kollias G."/>
            <person name="Krishnan S.P."/>
            <person name="Kruger A."/>
            <person name="Kummerfeld S.K."/>
            <person name="Kurochkin I.V."/>
            <person name="Lareau L.F."/>
            <person name="Lazarevic D."/>
            <person name="Lipovich L."/>
            <person name="Liu J."/>
            <person name="Liuni S."/>
            <person name="McWilliam S."/>
            <person name="Madan Babu M."/>
            <person name="Madera M."/>
            <person name="Marchionni L."/>
            <person name="Matsuda H."/>
            <person name="Matsuzawa S."/>
            <person name="Miki H."/>
            <person name="Mignone F."/>
            <person name="Miyake S."/>
            <person name="Morris K."/>
            <person name="Mottagui-Tabar S."/>
            <person name="Mulder N."/>
            <person name="Nakano N."/>
            <person name="Nakauchi H."/>
            <person name="Ng P."/>
            <person name="Nilsson R."/>
            <person name="Nishiguchi S."/>
            <person name="Nishikawa S."/>
            <person name="Nori F."/>
            <person name="Ohara O."/>
            <person name="Okazaki Y."/>
            <person name="Orlando V."/>
            <person name="Pang K.C."/>
            <person name="Pavan W.J."/>
            <person name="Pavesi G."/>
            <person name="Pesole G."/>
            <person name="Petrovsky N."/>
            <person name="Piazza S."/>
            <person name="Reed J."/>
            <person name="Reid J.F."/>
            <person name="Ring B.Z."/>
            <person name="Ringwald M."/>
            <person name="Rost B."/>
            <person name="Ruan Y."/>
            <person name="Salzberg S.L."/>
            <person name="Sandelin A."/>
            <person name="Schneider C."/>
            <person name="Schoenbach C."/>
            <person name="Sekiguchi K."/>
            <person name="Semple C.A."/>
            <person name="Seno S."/>
            <person name="Sessa L."/>
            <person name="Sheng Y."/>
            <person name="Shibata Y."/>
            <person name="Shimada H."/>
            <person name="Shimada K."/>
            <person name="Silva D."/>
            <person name="Sinclair B."/>
            <person name="Sperling S."/>
            <person name="Stupka E."/>
            <person name="Sugiura K."/>
            <person name="Sultana R."/>
            <person name="Takenaka Y."/>
            <person name="Taki K."/>
            <person name="Tammoja K."/>
            <person name="Tan S.L."/>
            <person name="Tang S."/>
            <person name="Taylor M.S."/>
            <person name="Tegner J."/>
            <person name="Teichmann S.A."/>
            <person name="Ueda H.R."/>
            <person name="van Nimwegen E."/>
            <person name="Verardo R."/>
            <person name="Wei C.L."/>
            <person name="Yagi K."/>
            <person name="Yamanishi H."/>
            <person name="Zabarovsky E."/>
            <person name="Zhu S."/>
            <person name="Zimmer A."/>
            <person name="Hide W."/>
            <person name="Bult C."/>
            <person name="Grimmond S.M."/>
            <person name="Teasdale R.D."/>
            <person name="Liu E.T."/>
            <person name="Brusic V."/>
            <person name="Quackenbush J."/>
            <person name="Wahlestedt C."/>
            <person name="Mattick J.S."/>
            <person name="Hume D.A."/>
            <person name="Kai C."/>
            <person name="Sasaki D."/>
            <person name="Tomaru Y."/>
            <person name="Fukuda S."/>
            <person name="Kanamori-Katayama M."/>
            <person name="Suzuki M."/>
            <person name="Aoki J."/>
            <person name="Arakawa T."/>
            <person name="Iida J."/>
            <person name="Imamura K."/>
            <person name="Itoh M."/>
            <person name="Kato T."/>
            <person name="Kawaji H."/>
            <person name="Kawagashira N."/>
            <person name="Kawashima T."/>
            <person name="Kojima M."/>
            <person name="Kondo S."/>
            <person name="Konno H."/>
            <person name="Nakano K."/>
            <person name="Ninomiya N."/>
            <person name="Nishio T."/>
            <person name="Okada M."/>
            <person name="Plessy C."/>
            <person name="Shibata K."/>
            <person name="Shiraki T."/>
            <person name="Suzuki S."/>
            <person name="Tagami M."/>
            <person name="Waki K."/>
            <person name="Watahiki A."/>
            <person name="Okamura-Oho Y."/>
            <person name="Suzuki H."/>
            <person name="Kawai J."/>
            <person name="Hayashizaki Y."/>
        </authorList>
    </citation>
    <scope>NUCLEOTIDE SEQUENCE [LARGE SCALE MRNA] OF 109-2822 (ISOFORM 3)</scope>
    <scope>NUCLEOTIDE SEQUENCE [LARGE SCALE MRNA] OF 2049-2822 (ISOFORM 2)</scope>
    <scope>NUCLEOTIDE SEQUENCE [LARGE SCALE MRNA] OF 2142-2822 (ISOFORM 1)</scope>
    <source>
        <strain>C57BL/6J</strain>
        <tissue>Colon</tissue>
        <tissue>Forelimb</tissue>
        <tissue>Testis</tissue>
    </source>
</reference>
<reference key="3">
    <citation type="journal article" date="2010" name="Cell">
        <title>A tissue-specific atlas of mouse protein phosphorylation and expression.</title>
        <authorList>
            <person name="Huttlin E.L."/>
            <person name="Jedrychowski M.P."/>
            <person name="Elias J.E."/>
            <person name="Goswami T."/>
            <person name="Rad R."/>
            <person name="Beausoleil S.A."/>
            <person name="Villen J."/>
            <person name="Haas W."/>
            <person name="Sowa M.E."/>
            <person name="Gygi S.P."/>
        </authorList>
    </citation>
    <scope>PHOSPHORYLATION [LARGE SCALE ANALYSIS] AT SER-856</scope>
    <scope>IDENTIFICATION BY MASS SPECTROMETRY [LARGE SCALE ANALYSIS]</scope>
    <source>
        <tissue>Kidney</tissue>
    </source>
</reference>
<reference key="4">
    <citation type="journal article" date="2012" name="Nature">
        <title>Piezo proteins are pore-forming subunits of mechanically activated channels.</title>
        <authorList>
            <person name="Coste B."/>
            <person name="Xiao B."/>
            <person name="Santos J.S."/>
            <person name="Syeda R."/>
            <person name="Grandl J."/>
            <person name="Spencer K.S."/>
            <person name="Kim S.E."/>
            <person name="Schmidt M."/>
            <person name="Mathur J."/>
            <person name="Dubin A.E."/>
            <person name="Montal M."/>
            <person name="Patapoutian A."/>
        </authorList>
    </citation>
    <scope>FUNCTION</scope>
    <scope>HOMOOLIGOMERIZATION</scope>
</reference>
<reference key="5">
    <citation type="journal article" date="2014" name="Nat. Commun.">
        <title>Tuning Piezo ion channels to detect molecular-scale movements relevant for fine touch.</title>
        <authorList>
            <person name="Poole K."/>
            <person name="Herget R."/>
            <person name="Lapatsina L."/>
            <person name="Ngo H.D."/>
            <person name="Lewin G.R."/>
        </authorList>
    </citation>
    <scope>INTERACTION WITH STOML3</scope>
    <scope>TISSUE SPECIFICITY</scope>
</reference>
<reference key="6">
    <citation type="journal article" date="2014" name="Nature">
        <title>Piezo2 is required for Merkel-cell mechanotransduction.</title>
        <authorList>
            <person name="Woo S.H."/>
            <person name="Ranade S."/>
            <person name="Weyer A.D."/>
            <person name="Dubin A.E."/>
            <person name="Baba Y."/>
            <person name="Qiu Z."/>
            <person name="Petrus M."/>
            <person name="Miyamoto T."/>
            <person name="Reddy K."/>
            <person name="Lumpkin E.A."/>
            <person name="Stucky C.L."/>
            <person name="Patapoutian A."/>
        </authorList>
    </citation>
    <scope>TISSUE SPECIFICITY</scope>
    <scope>FUNCTION</scope>
</reference>
<reference key="7">
    <citation type="journal article" date="2014" name="Nature">
        <title>Piezo2 is the major transducer of mechanical forces for touch sensation in mice.</title>
        <authorList>
            <person name="Ranade S.S."/>
            <person name="Woo S.H."/>
            <person name="Dubin A.E."/>
            <person name="Moshourab R.A."/>
            <person name="Wetzel C."/>
            <person name="Petrus M."/>
            <person name="Mathur J."/>
            <person name="Begay V."/>
            <person name="Coste B."/>
            <person name="Mainquist J."/>
            <person name="Wilson A.J."/>
            <person name="Francisco A.G."/>
            <person name="Reddy K."/>
            <person name="Qiu Z."/>
            <person name="Wood J.N."/>
            <person name="Lewin G.R."/>
            <person name="Patapoutian A."/>
        </authorList>
    </citation>
    <scope>FUNCTION</scope>
    <scope>TISSUE SPECIFICITY</scope>
    <scope>DISRUPTION PHENOTYPE</scope>
    <scope>SUBCELLULAR LOCATION</scope>
</reference>
<reference key="8">
    <citation type="journal article" date="2015" name="Nat. Neurosci.">
        <title>Piezo2 is the principal mechanotransduction channel for proprioception.</title>
        <authorList>
            <person name="Woo S.H."/>
            <person name="Lukacs V."/>
            <person name="de Nooij J.C."/>
            <person name="Zaytseva D."/>
            <person name="Criddle C.R."/>
            <person name="Francisco A."/>
            <person name="Jessell T.M."/>
            <person name="Wilkinson K.A."/>
            <person name="Patapoutian A."/>
        </authorList>
    </citation>
    <scope>FUNCTION</scope>
    <scope>TISSUE SPECIFICITY</scope>
    <scope>DISRUPTION PHENOTYPE</scope>
</reference>
<reference key="9">
    <citation type="journal article" date="2017" name="Nature">
        <title>Piezo2 senses airway stretch and mediates lung inflation-induced apnoea.</title>
        <authorList>
            <person name="Nonomura K."/>
            <person name="Woo S.H."/>
            <person name="Chang R.B."/>
            <person name="Gillich A."/>
            <person name="Qiu Z."/>
            <person name="Francisco A.G."/>
            <person name="Ranade S.S."/>
            <person name="Liberles S.D."/>
            <person name="Patapoutian A."/>
        </authorList>
    </citation>
    <scope>FUNCTION</scope>
    <scope>TISSUE SPECIFICITY</scope>
    <scope>DISRUPTION PHENOTYPE</scope>
</reference>
<reference key="10">
    <citation type="journal article" date="2020" name="Nature">
        <title>PIEZO2 in sensory neurons and urothelial cells coordinates urination.</title>
        <authorList>
            <person name="Marshall K.L."/>
            <person name="Saade D."/>
            <person name="Ghitani N."/>
            <person name="Coombs A.M."/>
            <person name="Szczot M."/>
            <person name="Keller J."/>
            <person name="Ogata T."/>
            <person name="Daou I."/>
            <person name="Stowers L.T."/>
            <person name="Boennemann C.G."/>
            <person name="Chesler A.T."/>
            <person name="Patapoutian A."/>
        </authorList>
    </citation>
    <scope>FUNCTION</scope>
    <scope>TISSUE SPECIFICITY</scope>
</reference>
<reference key="11">
    <citation type="journal article" date="2024" name="Cell Rep.">
        <title>TMC7 functions as a suppressor of Piezo2 in primary sensory neurons blunting peripheral mechanotransduction.</title>
        <authorList>
            <person name="Zhang X."/>
            <person name="Shao J."/>
            <person name="Wang C."/>
            <person name="Liu C."/>
            <person name="Hao H."/>
            <person name="Li X."/>
            <person name="An Y."/>
            <person name="He J."/>
            <person name="Zhao W."/>
            <person name="Zhao Y."/>
            <person name="Kong Y."/>
            <person name="Jia Z."/>
            <person name="Wan S."/>
            <person name="Yuan Y."/>
            <person name="Zhang H."/>
            <person name="Zhang H."/>
            <person name="Du X."/>
        </authorList>
    </citation>
    <scope>FUNCTION</scope>
    <scope>INTERACTION WITH TMC7</scope>
    <scope>TISSUE SPECIFICITY</scope>
</reference>
<reference key="12">
    <citation type="journal article" date="2024" name="Nat. Commun.">
        <title>The Piezo channel is a mechano-sensitive complex component in the mammalian inner ear hair cell.</title>
        <authorList>
            <person name="Lee J.H."/>
            <person name="Perez-Flores M.C."/>
            <person name="Park S."/>
            <person name="Kim H.J."/>
            <person name="Chen Y."/>
            <person name="Kang M."/>
            <person name="Kersigo J."/>
            <person name="Choi J."/>
            <person name="Thai P.N."/>
            <person name="Woltz R.L."/>
            <person name="Perez-Flores D.C."/>
            <person name="Perkins G."/>
            <person name="Sihn C.R."/>
            <person name="Trinh P."/>
            <person name="Zhang X.D."/>
            <person name="Sirish P."/>
            <person name="Dong Y."/>
            <person name="Feng W.W."/>
            <person name="Pessah I.N."/>
            <person name="Dixon R.E."/>
            <person name="Sokolowski B."/>
            <person name="Fritzsch B."/>
            <person name="Chiamvimonvat N."/>
            <person name="Yamoah E.N."/>
        </authorList>
    </citation>
    <scope>FUNCTION</scope>
    <scope>SUBUNIT</scope>
    <scope>INTERACTION WITH TMC1</scope>
    <scope>SUBCELLULAR LOCATION</scope>
    <scope>TISSUE SPECIFICITY</scope>
    <scope>DISRUPTION PHENOTYPE</scope>
    <scope>MUTAGENESIS OF 2767-MET--GLU-2770</scope>
</reference>
<reference key="13">
    <citation type="journal article" date="2022" name="J. Gen. Physiol.">
        <title>TMEM120A/TACAN inhibits mechanically activated PIEZO2 channels.</title>
        <authorList>
            <person name="Del Rosario J.S."/>
            <person name="Gabrielle M."/>
            <person name="Yudin Y."/>
            <person name="Rohacs T."/>
        </authorList>
    </citation>
    <scope>ACTIVITY REGULATION</scope>
</reference>
<reference key="14">
    <citation type="journal article" date="2024" name="Nat. Commun.">
        <title>Phosphatidic acid is an endogenous negative regulator of PIEZO2 channels and mechanical sensitivity.</title>
        <authorList>
            <person name="Gabrielle M."/>
            <person name="Yudin Y."/>
            <person name="Wang Y."/>
            <person name="Su X."/>
            <person name="Rohacs T."/>
        </authorList>
    </citation>
    <scope>ACTIVITY REGULATION</scope>
</reference>
<reference key="15">
    <citation type="journal article" date="2025" name="Cell Metab.">
        <title>Piezo2 in sensory neurons regulates systemic and adipose tissue metabolism.</title>
        <authorList>
            <person name="Passini F.S."/>
            <person name="Bornstein B."/>
            <person name="Rubin S."/>
            <person name="Kuperman Y."/>
            <person name="Krief S."/>
            <person name="Masschelein E."/>
            <person name="Mehlman T."/>
            <person name="Brandis A."/>
            <person name="Addadi Y."/>
            <person name="Shalom S.H."/>
            <person name="Richter E.A."/>
            <person name="Yardeni T."/>
            <person name="Tirosh A."/>
            <person name="De Bock K."/>
            <person name="Zelzer E."/>
        </authorList>
    </citation>
    <scope>FUNCTION</scope>
    <scope>DISRUPTION PHENOTYPE</scope>
    <scope>TISSUE SPECIFICITY</scope>
</reference>
<reference key="16">
    <citation type="journal article" date="2023" name="Science">
        <title>MyoD-family inhibitor proteins act as auxiliary subunits of Piezo channels.</title>
        <authorList>
            <person name="Zhou Z."/>
            <person name="Ma X."/>
            <person name="Lin Y."/>
            <person name="Cheng D."/>
            <person name="Bavi N."/>
            <person name="Secker G.A."/>
            <person name="Li J.V."/>
            <person name="Janbandhu V."/>
            <person name="Sutton D.L."/>
            <person name="Scott H.S."/>
            <person name="Yao M."/>
            <person name="Harvey R.P."/>
            <person name="Harvey N.L."/>
            <person name="Corry B."/>
            <person name="Zhang Y."/>
            <person name="Cox C.D."/>
        </authorList>
    </citation>
    <scope>FUNCTION</scope>
    <scope>ACTIVITY REGULATION</scope>
    <scope>SUBUNIT</scope>
    <scope>INTERACTION WITH MDFIC AND MDFI</scope>
    <scope>SUBCELLULAR LOCATION</scope>
</reference>
<reference evidence="24" key="17">
    <citation type="journal article" date="2019" name="Nature">
        <title>Structure and mechanogating of the mammalian tactile channel PIEZO2.</title>
        <authorList>
            <person name="Wang L."/>
            <person name="Zhou H."/>
            <person name="Zhang M."/>
            <person name="Liu W."/>
            <person name="Deng T."/>
            <person name="Zhao Q."/>
            <person name="Li Y."/>
            <person name="Lei J."/>
            <person name="Li X."/>
            <person name="Xiao B."/>
        </authorList>
    </citation>
    <scope>STRUCTURE BY ELECTRON MICROSCOPY (3.80 ANGSTROMS)</scope>
    <scope>DISULFIDE BONDS</scope>
    <scope>SUBUNIT</scope>
    <scope>FUNCTION</scope>
    <scope>TRANSPORTER ACTIVITY</scope>
    <scope>TOPOLOGY</scope>
    <scope>MUTAGENESIS OF GLU-2757</scope>
</reference>
<gene>
    <name evidence="23" type="primary">Piezo2</name>
    <name evidence="19" type="synonym">Fam38b</name>
</gene>
<protein>
    <recommendedName>
        <fullName>Piezo-type mechanosensitive ion channel component 2</fullName>
    </recommendedName>
    <alternativeName>
        <fullName evidence="19">Protein FAM38B</fullName>
    </alternativeName>
</protein>
<organism>
    <name type="scientific">Mus musculus</name>
    <name type="common">Mouse</name>
    <dbReference type="NCBI Taxonomy" id="10090"/>
    <lineage>
        <taxon>Eukaryota</taxon>
        <taxon>Metazoa</taxon>
        <taxon>Chordata</taxon>
        <taxon>Craniata</taxon>
        <taxon>Vertebrata</taxon>
        <taxon>Euteleostomi</taxon>
        <taxon>Mammalia</taxon>
        <taxon>Eutheria</taxon>
        <taxon>Euarchontoglires</taxon>
        <taxon>Glires</taxon>
        <taxon>Rodentia</taxon>
        <taxon>Myomorpha</taxon>
        <taxon>Muroidea</taxon>
        <taxon>Muridae</taxon>
        <taxon>Murinae</taxon>
        <taxon>Mus</taxon>
        <taxon>Mus</taxon>
    </lineage>
</organism>
<evidence type="ECO:0000255" key="1"/>
<evidence type="ECO:0000256" key="2">
    <source>
        <dbReference type="SAM" id="MobiDB-lite"/>
    </source>
</evidence>
<evidence type="ECO:0000269" key="3">
    <source>
    </source>
</evidence>
<evidence type="ECO:0000269" key="4">
    <source>
    </source>
</evidence>
<evidence type="ECO:0000269" key="5">
    <source>
    </source>
</evidence>
<evidence type="ECO:0000269" key="6">
    <source>
    </source>
</evidence>
<evidence type="ECO:0000269" key="7">
    <source>
    </source>
</evidence>
<evidence type="ECO:0000269" key="8">
    <source>
    </source>
</evidence>
<evidence type="ECO:0000269" key="9">
    <source>
    </source>
</evidence>
<evidence type="ECO:0000269" key="10">
    <source>
    </source>
</evidence>
<evidence type="ECO:0000269" key="11">
    <source>
    </source>
</evidence>
<evidence type="ECO:0000269" key="12">
    <source>
    </source>
</evidence>
<evidence type="ECO:0000269" key="13">
    <source>
    </source>
</evidence>
<evidence type="ECO:0000269" key="14">
    <source>
    </source>
</evidence>
<evidence type="ECO:0000269" key="15">
    <source>
    </source>
</evidence>
<evidence type="ECO:0000269" key="16">
    <source>
    </source>
</evidence>
<evidence type="ECO:0000269" key="17">
    <source>
    </source>
</evidence>
<evidence type="ECO:0000303" key="18">
    <source>
    </source>
</evidence>
<evidence type="ECO:0000303" key="19">
    <source>
    </source>
</evidence>
<evidence type="ECO:0000305" key="20"/>
<evidence type="ECO:0000305" key="21">
    <source>
    </source>
</evidence>
<evidence type="ECO:0000305" key="22">
    <source>
    </source>
</evidence>
<evidence type="ECO:0000312" key="23">
    <source>
        <dbReference type="MGI" id="MGI:1918781"/>
    </source>
</evidence>
<evidence type="ECO:0007744" key="24">
    <source>
        <dbReference type="PDB" id="6KG7"/>
    </source>
</evidence>
<evidence type="ECO:0007744" key="25">
    <source>
    </source>
</evidence>
<dbReference type="EMBL" id="HQ215521">
    <property type="protein sequence ID" value="ADN28065.1"/>
    <property type="molecule type" value="mRNA"/>
</dbReference>
<dbReference type="EMBL" id="AK018503">
    <property type="protein sequence ID" value="BAB31242.1"/>
    <property type="status" value="ALT_INIT"/>
    <property type="molecule type" value="mRNA"/>
</dbReference>
<dbReference type="EMBL" id="AK031235">
    <property type="protein sequence ID" value="BAC27312.1"/>
    <property type="status" value="ALT_INIT"/>
    <property type="molecule type" value="mRNA"/>
</dbReference>
<dbReference type="EMBL" id="AK031422">
    <property type="protein sequence ID" value="BAC27396.1"/>
    <property type="status" value="ALT_INIT"/>
    <property type="molecule type" value="mRNA"/>
</dbReference>
<dbReference type="RefSeq" id="NP_001034574.4">
    <property type="nucleotide sequence ID" value="NM_001039485.4"/>
</dbReference>
<dbReference type="PDB" id="6KG7">
    <property type="method" value="EM"/>
    <property type="resolution" value="3.80 A"/>
    <property type="chains" value="A/B/C=1-2822"/>
</dbReference>
<dbReference type="PDBsum" id="6KG7"/>
<dbReference type="EMDB" id="EMD-9975"/>
<dbReference type="SMR" id="Q8CD54"/>
<dbReference type="FunCoup" id="Q8CD54">
    <property type="interactions" value="876"/>
</dbReference>
<dbReference type="IntAct" id="Q8CD54">
    <property type="interactions" value="1"/>
</dbReference>
<dbReference type="STRING" id="10090.ENSMUSP00000040019"/>
<dbReference type="GlyCosmos" id="Q8CD54">
    <property type="glycosylation" value="4 sites, No reported glycans"/>
</dbReference>
<dbReference type="GlyGen" id="Q8CD54">
    <property type="glycosylation" value="5 sites"/>
</dbReference>
<dbReference type="iPTMnet" id="Q8CD54"/>
<dbReference type="PhosphoSitePlus" id="Q8CD54"/>
<dbReference type="jPOST" id="Q8CD54"/>
<dbReference type="PaxDb" id="10090-ENSMUSP00000040019"/>
<dbReference type="ProteomicsDB" id="289495">
    <molecule id="Q8CD54-1"/>
</dbReference>
<dbReference type="ProteomicsDB" id="289496">
    <molecule id="Q8CD54-2"/>
</dbReference>
<dbReference type="ProteomicsDB" id="289497">
    <molecule id="Q8CD54-3"/>
</dbReference>
<dbReference type="Antibodypedia" id="2900">
    <property type="antibodies" value="212 antibodies from 20 providers"/>
</dbReference>
<dbReference type="Ensembl" id="ENSMUST00000182166.9">
    <molecule id="Q8CD54-3"/>
    <property type="protein sequence ID" value="ENSMUSP00000138754.3"/>
    <property type="gene ID" value="ENSMUSG00000041482.18"/>
</dbReference>
<dbReference type="GeneID" id="667742"/>
<dbReference type="KEGG" id="mmu:667742"/>
<dbReference type="UCSC" id="uc008fdw.1">
    <molecule id="Q8CD54-3"/>
    <property type="organism name" value="mouse"/>
</dbReference>
<dbReference type="AGR" id="MGI:1918781"/>
<dbReference type="CTD" id="63895"/>
<dbReference type="MGI" id="MGI:1918781">
    <property type="gene designation" value="Piezo2"/>
</dbReference>
<dbReference type="VEuPathDB" id="HostDB:ENSMUSG00000041482"/>
<dbReference type="eggNOG" id="KOG1893">
    <property type="taxonomic scope" value="Eukaryota"/>
</dbReference>
<dbReference type="GeneTree" id="ENSGT00940000154456"/>
<dbReference type="HOGENOM" id="CLU_021835_2_0_1"/>
<dbReference type="InParanoid" id="Q8CD54"/>
<dbReference type="OrthoDB" id="303066at2759"/>
<dbReference type="PhylomeDB" id="Q8CD54"/>
<dbReference type="BioGRID-ORCS" id="667742">
    <property type="hits" value="0 hits in 72 CRISPR screens"/>
</dbReference>
<dbReference type="ChiTaRS" id="Piezo2">
    <property type="organism name" value="mouse"/>
</dbReference>
<dbReference type="PRO" id="PR:Q8CD54"/>
<dbReference type="Proteomes" id="UP000000589">
    <property type="component" value="Chromosome 18"/>
</dbReference>
<dbReference type="RNAct" id="Q8CD54">
    <property type="molecule type" value="protein"/>
</dbReference>
<dbReference type="Bgee" id="ENSMUSG00000041482">
    <property type="expression patterns" value="Expressed in lumbar dorsal root ganglion and 130 other cell types or tissues"/>
</dbReference>
<dbReference type="ExpressionAtlas" id="Q8CD54">
    <property type="expression patterns" value="baseline and differential"/>
</dbReference>
<dbReference type="GO" id="GO:0032437">
    <property type="term" value="C:cuticular plate"/>
    <property type="evidence" value="ECO:0000314"/>
    <property type="project" value="UniProtKB"/>
</dbReference>
<dbReference type="GO" id="GO:0032809">
    <property type="term" value="C:neuronal cell body membrane"/>
    <property type="evidence" value="ECO:0000314"/>
    <property type="project" value="UniProtKB"/>
</dbReference>
<dbReference type="GO" id="GO:0005886">
    <property type="term" value="C:plasma membrane"/>
    <property type="evidence" value="ECO:0000305"/>
    <property type="project" value="MGI"/>
</dbReference>
<dbReference type="GO" id="GO:0032420">
    <property type="term" value="C:stereocilium"/>
    <property type="evidence" value="ECO:0000314"/>
    <property type="project" value="UniProtKB"/>
</dbReference>
<dbReference type="GO" id="GO:0140135">
    <property type="term" value="F:mechanosensitive monoatomic cation channel activity"/>
    <property type="evidence" value="ECO:0000314"/>
    <property type="project" value="MGI"/>
</dbReference>
<dbReference type="GO" id="GO:0008381">
    <property type="term" value="F:mechanosensitive monoatomic ion channel activity"/>
    <property type="evidence" value="ECO:0000314"/>
    <property type="project" value="UniProtKB"/>
</dbReference>
<dbReference type="GO" id="GO:0005261">
    <property type="term" value="F:monoatomic cation channel activity"/>
    <property type="evidence" value="ECO:0000314"/>
    <property type="project" value="MGI"/>
</dbReference>
<dbReference type="GO" id="GO:0050974">
    <property type="term" value="P:detection of mechanical stimulus involved in sensory perception"/>
    <property type="evidence" value="ECO:0000315"/>
    <property type="project" value="UniProtKB"/>
</dbReference>
<dbReference type="GO" id="GO:0006812">
    <property type="term" value="P:monoatomic cation transport"/>
    <property type="evidence" value="ECO:0000314"/>
    <property type="project" value="MGI"/>
</dbReference>
<dbReference type="GO" id="GO:0042391">
    <property type="term" value="P:regulation of membrane potential"/>
    <property type="evidence" value="ECO:0000314"/>
    <property type="project" value="MGI"/>
</dbReference>
<dbReference type="GO" id="GO:0009612">
    <property type="term" value="P:response to mechanical stimulus"/>
    <property type="evidence" value="ECO:0000314"/>
    <property type="project" value="UniProtKB"/>
</dbReference>
<dbReference type="InterPro" id="IPR027272">
    <property type="entry name" value="Piezo"/>
</dbReference>
<dbReference type="InterPro" id="IPR031334">
    <property type="entry name" value="Piezo_cap_dom"/>
</dbReference>
<dbReference type="InterPro" id="IPR056770">
    <property type="entry name" value="Piezo_THU9_anchor"/>
</dbReference>
<dbReference type="InterPro" id="IPR056769">
    <property type="entry name" value="Piezo_TM1-24"/>
</dbReference>
<dbReference type="InterPro" id="IPR031805">
    <property type="entry name" value="Piezo_TM25-28"/>
</dbReference>
<dbReference type="InterPro" id="IPR056768">
    <property type="entry name" value="THU_Piezo"/>
</dbReference>
<dbReference type="PANTHER" id="PTHR47049:SF6">
    <property type="entry name" value="PIEZO-TYPE MECHANOSENSITIVE ION CHANNEL COMPONENT"/>
    <property type="match status" value="1"/>
</dbReference>
<dbReference type="PANTHER" id="PTHR47049">
    <property type="entry name" value="PIEZO-TYPE MECHANOSENSITIVE ION CHANNEL HOMOLOG"/>
    <property type="match status" value="1"/>
</dbReference>
<dbReference type="Pfam" id="PF12166">
    <property type="entry name" value="Piezo_cap"/>
    <property type="match status" value="1"/>
</dbReference>
<dbReference type="Pfam" id="PF24874">
    <property type="entry name" value="Piezo_THU9_anchor"/>
    <property type="match status" value="1"/>
</dbReference>
<dbReference type="Pfam" id="PF24871">
    <property type="entry name" value="Piezo_TM1-24"/>
    <property type="match status" value="2"/>
</dbReference>
<dbReference type="Pfam" id="PF15917">
    <property type="entry name" value="Piezo_TM25-28"/>
    <property type="match status" value="1"/>
</dbReference>
<dbReference type="Pfam" id="PF23188">
    <property type="entry name" value="THU_Piezo1"/>
    <property type="match status" value="1"/>
</dbReference>
<feature type="chain" id="PRO_0000186819" description="Piezo-type mechanosensitive ion channel component 2">
    <location>
        <begin position="1"/>
        <end position="2822"/>
    </location>
</feature>
<feature type="topological domain" description="Cytoplasmic" evidence="10 24">
    <location>
        <begin position="1"/>
        <end position="12"/>
    </location>
</feature>
<feature type="transmembrane region" description="Helical; Name=1" evidence="10 24">
    <location>
        <begin position="13"/>
        <end position="24"/>
    </location>
</feature>
<feature type="topological domain" description="Extracellular" evidence="10 24">
    <location>
        <begin position="25"/>
        <end position="30"/>
    </location>
</feature>
<feature type="transmembrane region" description="Helical; Name=2" evidence="10 24">
    <location>
        <begin position="31"/>
        <end position="43"/>
    </location>
</feature>
<feature type="topological domain" description="Cytoplasmic" evidence="10 24">
    <location>
        <begin position="44"/>
        <end position="50"/>
    </location>
</feature>
<feature type="transmembrane region" description="Helical; Name=3" evidence="10 24">
    <location>
        <begin position="51"/>
        <end position="76"/>
    </location>
</feature>
<feature type="topological domain" description="Extracellular" evidence="10 24">
    <location>
        <begin position="77"/>
        <end position="122"/>
    </location>
</feature>
<feature type="transmembrane region" description="Helical; Name=4" evidence="10 24">
    <location>
        <begin position="123"/>
        <end position="141"/>
    </location>
</feature>
<feature type="topological domain" description="Cytoplasmic" evidence="10 24">
    <location>
        <begin position="142"/>
        <end position="221"/>
    </location>
</feature>
<feature type="transmembrane region" description="Helical; Name=5" evidence="10 24">
    <location>
        <begin position="222"/>
        <end position="237"/>
    </location>
</feature>
<feature type="topological domain" description="Extracellular" evidence="10 24">
    <location>
        <begin position="238"/>
        <end position="240"/>
    </location>
</feature>
<feature type="transmembrane region" description="Helical; Name=6" evidence="10 24">
    <location>
        <begin position="241"/>
        <end position="258"/>
    </location>
</feature>
<feature type="topological domain" description="Cytoplasmic" evidence="10 24">
    <location>
        <begin position="259"/>
        <end position="264"/>
    </location>
</feature>
<feature type="transmembrane region" description="Helical; Name=7" evidence="10 24">
    <location>
        <begin position="265"/>
        <end position="287"/>
    </location>
</feature>
<feature type="topological domain" description="Extracellular" evidence="10 24">
    <location>
        <begin position="288"/>
        <end position="335"/>
    </location>
</feature>
<feature type="transmembrane region" description="Helical; Name=8" evidence="10 24">
    <location>
        <begin position="336"/>
        <end position="355"/>
    </location>
</feature>
<feature type="topological domain" description="Cytoplasmic" evidence="10 24">
    <location>
        <begin position="356"/>
        <end position="492"/>
    </location>
</feature>
<feature type="transmembrane region" description="Helical; Name=9" evidence="10 24">
    <location>
        <begin position="493"/>
        <end position="514"/>
    </location>
</feature>
<feature type="topological domain" description="Extracellular" evidence="10 24">
    <location>
        <begin position="515"/>
        <end position="519"/>
    </location>
</feature>
<feature type="transmembrane region" description="Helical; Name=10" evidence="10 24">
    <location>
        <begin position="520"/>
        <end position="531"/>
    </location>
</feature>
<feature type="topological domain" description="Cytoplasmic" evidence="10 24">
    <location>
        <begin position="532"/>
        <end position="535"/>
    </location>
</feature>
<feature type="transmembrane region" description="Helical; Name=11" evidence="10 24">
    <location>
        <begin position="536"/>
        <end position="562"/>
    </location>
</feature>
<feature type="topological domain" description="Extracellular" evidence="10 24">
    <location>
        <begin position="563"/>
        <end position="583"/>
    </location>
</feature>
<feature type="transmembrane region" description="Helical; Name=12" evidence="10 24">
    <location>
        <begin position="584"/>
        <end position="614"/>
    </location>
</feature>
<feature type="topological domain" description="Cytoplasmic" evidence="10 24">
    <location>
        <begin position="615"/>
        <end position="689"/>
    </location>
</feature>
<feature type="transmembrane region" description="Helical; Name=13" evidence="10 24">
    <location>
        <begin position="690"/>
        <end position="703"/>
    </location>
</feature>
<feature type="topological domain" description="Extracellular" evidence="10 24">
    <location>
        <begin position="704"/>
        <end position="709"/>
    </location>
</feature>
<feature type="transmembrane region" description="Helical; Name=14" evidence="10 24">
    <location>
        <begin position="710"/>
        <end position="728"/>
    </location>
</feature>
<feature type="topological domain" description="Cytoplasmic" evidence="10 24">
    <location>
        <begin position="729"/>
        <end position="737"/>
    </location>
</feature>
<feature type="transmembrane region" description="Helical; Name=15" evidence="10 24">
    <location>
        <begin position="738"/>
        <end position="757"/>
    </location>
</feature>
<feature type="topological domain" description="Extracellular" evidence="10 24">
    <location>
        <begin position="758"/>
        <end position="789"/>
    </location>
</feature>
<feature type="transmembrane region" description="Helical; Name=16" evidence="10 24">
    <location>
        <begin position="790"/>
        <end position="811"/>
    </location>
</feature>
<feature type="topological domain" description="Cytoplasmic" evidence="10 24">
    <location>
        <begin position="812"/>
        <end position="957"/>
    </location>
</feature>
<feature type="transmembrane region" description="Helical; Name=17" evidence="10 24">
    <location>
        <begin position="958"/>
        <end position="973"/>
    </location>
</feature>
<feature type="topological domain" description="Extracellular" evidence="10 24">
    <location>
        <begin position="974"/>
        <end position="979"/>
    </location>
</feature>
<feature type="transmembrane region" description="Helical; Name=18" evidence="10 24">
    <location>
        <begin position="980"/>
        <end position="989"/>
    </location>
</feature>
<feature type="topological domain" description="Cytoplasmic" evidence="10 24">
    <location>
        <begin position="990"/>
        <end position="997"/>
    </location>
</feature>
<feature type="transmembrane region" description="Helical; Name=19" evidence="10 24">
    <location>
        <begin position="998"/>
        <end position="1018"/>
    </location>
</feature>
<feature type="topological domain" description="Extracellular" evidence="10 24">
    <location>
        <begin position="1019"/>
        <end position="1074"/>
    </location>
</feature>
<feature type="transmembrane region" description="Helical; Name=20" evidence="10 24">
    <location>
        <begin position="1075"/>
        <end position="1099"/>
    </location>
</feature>
<feature type="topological domain" description="Cytoplasmic" evidence="10 24">
    <location>
        <begin position="1100"/>
        <end position="1140"/>
    </location>
</feature>
<feature type="transmembrane region" description="Helical; Name=21" evidence="10 24">
    <location>
        <begin position="1141"/>
        <end position="1155"/>
    </location>
</feature>
<feature type="topological domain" description="Extracellular" evidence="10 20 24">
    <location>
        <begin position="1156"/>
        <end position="1157"/>
    </location>
</feature>
<feature type="transmembrane region" description="Helical; Name=22" evidence="10 24">
    <location>
        <begin position="1158"/>
        <end position="1171"/>
    </location>
</feature>
<feature type="topological domain" description="Cytoplasmic" evidence="10 24">
    <location>
        <begin position="1172"/>
        <end position="1182"/>
    </location>
</feature>
<feature type="transmembrane region" description="Helical; Name=23" evidence="10 24">
    <location>
        <begin position="1183"/>
        <end position="1202"/>
    </location>
</feature>
<feature type="topological domain" description="Extracellular" evidence="10 24">
    <location>
        <begin position="1203"/>
        <end position="1239"/>
    </location>
</feature>
<feature type="transmembrane region" description="Helical; Name=24" evidence="10 24">
    <location>
        <begin position="1240"/>
        <end position="1260"/>
    </location>
</feature>
<feature type="topological domain" description="Cytoplasmic" evidence="10 24">
    <location>
        <begin position="1261"/>
        <end position="1314"/>
    </location>
</feature>
<feature type="transmembrane region" description="Helical; Name=25" evidence="10 24">
    <location>
        <begin position="1315"/>
        <end position="1327"/>
    </location>
</feature>
<feature type="topological domain" description="Extracellular" evidence="10 20 24">
    <location>
        <begin position="1328"/>
        <end position="1333"/>
    </location>
</feature>
<feature type="transmembrane region" description="Helical; Name=26" evidence="10 24">
    <location>
        <begin position="1334"/>
        <end position="1346"/>
    </location>
</feature>
<feature type="topological domain" description="Cytoplasmic" evidence="10 24">
    <location>
        <begin position="1347"/>
        <end position="1355"/>
    </location>
</feature>
<feature type="transmembrane region" description="Helical; Name=27" evidence="10 24">
    <location>
        <begin position="1356"/>
        <end position="1381"/>
    </location>
</feature>
<feature type="topological domain" description="Extracellular" evidence="10 24">
    <location>
        <begin position="1382"/>
        <end position="1430"/>
    </location>
</feature>
<feature type="transmembrane region" description="Helical; Name=28" evidence="10 24">
    <location>
        <begin position="1431"/>
        <end position="1447"/>
    </location>
</feature>
<feature type="topological domain" description="Cytoplasmic" evidence="10 24">
    <location>
        <begin position="1448"/>
        <end position="1991"/>
    </location>
</feature>
<feature type="transmembrane region" description="Helical; Name=29" evidence="10 24">
    <location>
        <begin position="1992"/>
        <end position="2006"/>
    </location>
</feature>
<feature type="topological domain" description="Extracellular" evidence="10 24">
    <location>
        <begin position="2007"/>
        <end position="2013"/>
    </location>
</feature>
<feature type="transmembrane region" description="Helical; Name=30" evidence="10 24">
    <location>
        <begin position="2014"/>
        <end position="2025"/>
    </location>
</feature>
<feature type="topological domain" description="Cytoplasmic" evidence="10 24">
    <location>
        <begin position="2026"/>
        <end position="2031"/>
    </location>
</feature>
<feature type="transmembrane region" description="Helical; Name=31" evidence="10 24">
    <location>
        <begin position="2032"/>
        <end position="2053"/>
    </location>
</feature>
<feature type="topological domain" description="Extracellular" evidence="10 24">
    <location>
        <begin position="2054"/>
        <end position="2086"/>
    </location>
</feature>
<feature type="transmembrane region" description="Helical; Name=32" evidence="10 24">
    <location>
        <begin position="2087"/>
        <end position="2105"/>
    </location>
</feature>
<feature type="topological domain" description="Cytoplasmic" evidence="10 24">
    <location>
        <begin position="2106"/>
        <end position="2259"/>
    </location>
</feature>
<feature type="transmembrane region" description="Helical; Name=33" evidence="10 24">
    <location>
        <begin position="2260"/>
        <end position="2279"/>
    </location>
</feature>
<feature type="topological domain" description="Extracellular" evidence="10 24">
    <location>
        <begin position="2280"/>
        <end position="2301"/>
    </location>
</feature>
<feature type="transmembrane region" description="Helical; Name=34" evidence="10 24">
    <location>
        <begin position="2302"/>
        <end position="2322"/>
    </location>
</feature>
<feature type="topological domain" description="Cytoplasmic" evidence="10 24">
    <location>
        <begin position="2323"/>
        <end position="2326"/>
    </location>
</feature>
<feature type="transmembrane region" description="Helical; Name=35" evidence="10 24">
    <location>
        <begin position="2327"/>
        <end position="2350"/>
    </location>
</feature>
<feature type="topological domain" description="Extracellular" evidence="10 24">
    <location>
        <begin position="2351"/>
        <end position="2359"/>
    </location>
</feature>
<feature type="transmembrane region" description="Helical; Name=36" evidence="10 24">
    <location>
        <begin position="2360"/>
        <end position="2382"/>
    </location>
</feature>
<feature type="topological domain" description="Cytoplasmic" evidence="10 24">
    <location>
        <begin position="2383"/>
        <end position="2467"/>
    </location>
</feature>
<feature type="transmembrane region" description="Helical; Name=37" evidence="10 24">
    <location>
        <begin position="2468"/>
        <end position="2491"/>
    </location>
</feature>
<feature type="topological domain" description="Extracellular" evidence="10 24">
    <location>
        <begin position="2492"/>
        <end position="2739"/>
    </location>
</feature>
<feature type="transmembrane region" description="Helical; Name=38" evidence="10 24">
    <location>
        <begin position="2740"/>
        <end position="2760"/>
    </location>
</feature>
<feature type="topological domain" description="Cytoplasmic" evidence="10 24">
    <location>
        <begin position="2761"/>
        <end position="2822"/>
    </location>
</feature>
<feature type="region of interest" description="Disordered" evidence="2">
    <location>
        <begin position="450"/>
        <end position="481"/>
    </location>
</feature>
<feature type="region of interest" description="Disordered" evidence="2">
    <location>
        <begin position="624"/>
        <end position="668"/>
    </location>
</feature>
<feature type="region of interest" description="Disordered" evidence="2">
    <location>
        <begin position="875"/>
        <end position="919"/>
    </location>
</feature>
<feature type="region of interest" description="Disordered" evidence="2">
    <location>
        <begin position="1505"/>
        <end position="1551"/>
    </location>
</feature>
<feature type="region of interest" description="Disordered" evidence="2">
    <location>
        <begin position="1611"/>
        <end position="1653"/>
    </location>
</feature>
<feature type="region of interest" description="Disordered" evidence="2">
    <location>
        <begin position="2120"/>
        <end position="2139"/>
    </location>
</feature>
<feature type="region of interest" description="Disordered" evidence="2">
    <location>
        <begin position="2164"/>
        <end position="2205"/>
    </location>
</feature>
<feature type="coiled-coil region" evidence="1">
    <location>
        <begin position="455"/>
        <end position="482"/>
    </location>
</feature>
<feature type="coiled-coil region" evidence="1">
    <location>
        <begin position="1475"/>
        <end position="1515"/>
    </location>
</feature>
<feature type="compositionally biased region" description="Acidic residues" evidence="2">
    <location>
        <begin position="463"/>
        <end position="477"/>
    </location>
</feature>
<feature type="compositionally biased region" description="Acidic residues" evidence="2">
    <location>
        <begin position="624"/>
        <end position="633"/>
    </location>
</feature>
<feature type="compositionally biased region" description="Acidic residues" evidence="2">
    <location>
        <begin position="643"/>
        <end position="652"/>
    </location>
</feature>
<feature type="compositionally biased region" description="Basic and acidic residues" evidence="2">
    <location>
        <begin position="653"/>
        <end position="662"/>
    </location>
</feature>
<feature type="compositionally biased region" description="Basic and acidic residues" evidence="2">
    <location>
        <begin position="875"/>
        <end position="901"/>
    </location>
</feature>
<feature type="compositionally biased region" description="Acidic residues" evidence="2">
    <location>
        <begin position="902"/>
        <end position="919"/>
    </location>
</feature>
<feature type="compositionally biased region" description="Basic residues" evidence="2">
    <location>
        <begin position="1611"/>
        <end position="1621"/>
    </location>
</feature>
<feature type="compositionally biased region" description="Basic and acidic residues" evidence="2">
    <location>
        <begin position="1622"/>
        <end position="1633"/>
    </location>
</feature>
<feature type="compositionally biased region" description="Low complexity" evidence="2">
    <location>
        <begin position="2170"/>
        <end position="2197"/>
    </location>
</feature>
<feature type="modified residue" description="Phosphoserine" evidence="25">
    <location>
        <position position="856"/>
    </location>
</feature>
<feature type="glycosylation site" description="N-linked (GlcNAc...) asparagine" evidence="1">
    <location>
        <position position="95"/>
    </location>
</feature>
<feature type="glycosylation site" description="N-linked (GlcNAc...) asparagine" evidence="1">
    <location>
        <position position="1030"/>
    </location>
</feature>
<feature type="glycosylation site" description="N-linked (GlcNAc...) asparagine" evidence="1">
    <location>
        <position position="2692"/>
    </location>
</feature>
<feature type="disulfide bond" evidence="10 24">
    <location>
        <begin position="1031"/>
        <end position="1209"/>
    </location>
</feature>
<feature type="splice variant" id="VSP_040631" description="In isoform 3." evidence="18">
    <original>DEELQDVQVEGEPTEK</original>
    <variation>MLFPMKDNTKCQRNFL</variation>
    <location>
        <begin position="629"/>
        <end position="644"/>
    </location>
</feature>
<feature type="splice variant" id="VSP_040632" description="In isoform 3." evidence="18">
    <location>
        <begin position="645"/>
        <end position="2822"/>
    </location>
</feature>
<feature type="splice variant" id="VSP_040473" description="In isoform 2." evidence="18">
    <original>RYPQPRGQKKKKAVKYGMGGMIIVLLICIVWFPLLFMSLIKSVAGVIN</original>
    <variation>VKSRWKCLCHACRPRAQVCYKINMDTAWLVARWMEAGDTTCREPEIQH</variation>
    <location>
        <begin position="2457"/>
        <end position="2504"/>
    </location>
</feature>
<feature type="splice variant" id="VSP_040474" description="In isoform 2." evidence="18">
    <location>
        <begin position="2505"/>
        <end position="2822"/>
    </location>
</feature>
<feature type="mutagenesis site" description="Reduces to around 50% the permeability of Ca(2+)." evidence="10">
    <original>E</original>
    <variation>A</variation>
    <location>
        <position position="2757"/>
    </location>
</feature>
<feature type="mutagenesis site" description="Hearing and vestibular impairment in conditional knockin mice in inner ear hair cells." evidence="14">
    <original>MFEE</original>
    <variation>AAAA</variation>
    <location>
        <begin position="2767"/>
        <end position="2770"/>
    </location>
</feature>
<feature type="sequence conflict" description="In Ref. 2; BAC27396." evidence="20" ref="2">
    <original>P</original>
    <variation>Q</variation>
    <location>
        <position position="2810"/>
    </location>
</feature>
<accession>Q8CD54</accession>
<accession>E2JF23</accession>
<accession>Q8BSM4</accession>
<accession>Q9D341</accession>